<accession>Q7MYG9</accession>
<proteinExistence type="inferred from homology"/>
<gene>
    <name evidence="1" type="primary">rpmD</name>
    <name type="ordered locus">plu4708</name>
</gene>
<dbReference type="EMBL" id="BX571874">
    <property type="protein sequence ID" value="CAE17080.1"/>
    <property type="molecule type" value="Genomic_DNA"/>
</dbReference>
<dbReference type="RefSeq" id="WP_011148777.1">
    <property type="nucleotide sequence ID" value="NC_005126.1"/>
</dbReference>
<dbReference type="SMR" id="Q7MYG9"/>
<dbReference type="STRING" id="243265.plu4708"/>
<dbReference type="GeneID" id="88808140"/>
<dbReference type="KEGG" id="plu:plu4708"/>
<dbReference type="eggNOG" id="COG1841">
    <property type="taxonomic scope" value="Bacteria"/>
</dbReference>
<dbReference type="HOGENOM" id="CLU_131047_1_4_6"/>
<dbReference type="OrthoDB" id="9812790at2"/>
<dbReference type="Proteomes" id="UP000002514">
    <property type="component" value="Chromosome"/>
</dbReference>
<dbReference type="GO" id="GO:0022625">
    <property type="term" value="C:cytosolic large ribosomal subunit"/>
    <property type="evidence" value="ECO:0007669"/>
    <property type="project" value="TreeGrafter"/>
</dbReference>
<dbReference type="GO" id="GO:0003735">
    <property type="term" value="F:structural constituent of ribosome"/>
    <property type="evidence" value="ECO:0007669"/>
    <property type="project" value="InterPro"/>
</dbReference>
<dbReference type="GO" id="GO:0006412">
    <property type="term" value="P:translation"/>
    <property type="evidence" value="ECO:0007669"/>
    <property type="project" value="UniProtKB-UniRule"/>
</dbReference>
<dbReference type="CDD" id="cd01658">
    <property type="entry name" value="Ribosomal_L30"/>
    <property type="match status" value="1"/>
</dbReference>
<dbReference type="FunFam" id="3.30.1390.20:FF:000001">
    <property type="entry name" value="50S ribosomal protein L30"/>
    <property type="match status" value="1"/>
</dbReference>
<dbReference type="Gene3D" id="3.30.1390.20">
    <property type="entry name" value="Ribosomal protein L30, ferredoxin-like fold domain"/>
    <property type="match status" value="1"/>
</dbReference>
<dbReference type="HAMAP" id="MF_01371_B">
    <property type="entry name" value="Ribosomal_uL30_B"/>
    <property type="match status" value="1"/>
</dbReference>
<dbReference type="InterPro" id="IPR036919">
    <property type="entry name" value="Ribo_uL30_ferredoxin-like_sf"/>
</dbReference>
<dbReference type="InterPro" id="IPR005996">
    <property type="entry name" value="Ribosomal_uL30_bac-type"/>
</dbReference>
<dbReference type="InterPro" id="IPR018038">
    <property type="entry name" value="Ribosomal_uL30_CS"/>
</dbReference>
<dbReference type="InterPro" id="IPR016082">
    <property type="entry name" value="Ribosomal_uL30_ferredoxin-like"/>
</dbReference>
<dbReference type="NCBIfam" id="TIGR01308">
    <property type="entry name" value="rpmD_bact"/>
    <property type="match status" value="1"/>
</dbReference>
<dbReference type="PANTHER" id="PTHR15892:SF2">
    <property type="entry name" value="LARGE RIBOSOMAL SUBUNIT PROTEIN UL30M"/>
    <property type="match status" value="1"/>
</dbReference>
<dbReference type="PANTHER" id="PTHR15892">
    <property type="entry name" value="MITOCHONDRIAL RIBOSOMAL PROTEIN L30"/>
    <property type="match status" value="1"/>
</dbReference>
<dbReference type="Pfam" id="PF00327">
    <property type="entry name" value="Ribosomal_L30"/>
    <property type="match status" value="1"/>
</dbReference>
<dbReference type="PIRSF" id="PIRSF002211">
    <property type="entry name" value="Ribosomal_L30_bac-type"/>
    <property type="match status" value="1"/>
</dbReference>
<dbReference type="SUPFAM" id="SSF55129">
    <property type="entry name" value="Ribosomal protein L30p/L7e"/>
    <property type="match status" value="1"/>
</dbReference>
<dbReference type="PROSITE" id="PS00634">
    <property type="entry name" value="RIBOSOMAL_L30"/>
    <property type="match status" value="1"/>
</dbReference>
<protein>
    <recommendedName>
        <fullName evidence="1">Large ribosomal subunit protein uL30</fullName>
    </recommendedName>
    <alternativeName>
        <fullName evidence="2">50S ribosomal protein L30</fullName>
    </alternativeName>
</protein>
<feature type="chain" id="PRO_0000273821" description="Large ribosomal subunit protein uL30">
    <location>
        <begin position="1"/>
        <end position="59"/>
    </location>
</feature>
<comment type="subunit">
    <text evidence="1">Part of the 50S ribosomal subunit.</text>
</comment>
<comment type="similarity">
    <text evidence="1">Belongs to the universal ribosomal protein uL30 family.</text>
</comment>
<reference key="1">
    <citation type="journal article" date="2003" name="Nat. Biotechnol.">
        <title>The genome sequence of the entomopathogenic bacterium Photorhabdus luminescens.</title>
        <authorList>
            <person name="Duchaud E."/>
            <person name="Rusniok C."/>
            <person name="Frangeul L."/>
            <person name="Buchrieser C."/>
            <person name="Givaudan A."/>
            <person name="Taourit S."/>
            <person name="Bocs S."/>
            <person name="Boursaux-Eude C."/>
            <person name="Chandler M."/>
            <person name="Charles J.-F."/>
            <person name="Dassa E."/>
            <person name="Derose R."/>
            <person name="Derzelle S."/>
            <person name="Freyssinet G."/>
            <person name="Gaudriault S."/>
            <person name="Medigue C."/>
            <person name="Lanois A."/>
            <person name="Powell K."/>
            <person name="Siguier P."/>
            <person name="Vincent R."/>
            <person name="Wingate V."/>
            <person name="Zouine M."/>
            <person name="Glaser P."/>
            <person name="Boemare N."/>
            <person name="Danchin A."/>
            <person name="Kunst F."/>
        </authorList>
    </citation>
    <scope>NUCLEOTIDE SEQUENCE [LARGE SCALE GENOMIC DNA]</scope>
    <source>
        <strain>DSM 15139 / CIP 105565 / TT01</strain>
    </source>
</reference>
<name>RL30_PHOLL</name>
<evidence type="ECO:0000255" key="1">
    <source>
        <dbReference type="HAMAP-Rule" id="MF_01371"/>
    </source>
</evidence>
<evidence type="ECO:0000305" key="2"/>
<organism>
    <name type="scientific">Photorhabdus laumondii subsp. laumondii (strain DSM 15139 / CIP 105565 / TT01)</name>
    <name type="common">Photorhabdus luminescens subsp. laumondii</name>
    <dbReference type="NCBI Taxonomy" id="243265"/>
    <lineage>
        <taxon>Bacteria</taxon>
        <taxon>Pseudomonadati</taxon>
        <taxon>Pseudomonadota</taxon>
        <taxon>Gammaproteobacteria</taxon>
        <taxon>Enterobacterales</taxon>
        <taxon>Morganellaceae</taxon>
        <taxon>Photorhabdus</taxon>
    </lineage>
</organism>
<keyword id="KW-1185">Reference proteome</keyword>
<keyword id="KW-0687">Ribonucleoprotein</keyword>
<keyword id="KW-0689">Ribosomal protein</keyword>
<sequence length="59" mass="6600">MAKTIKVTQIRSSIGRLPKHKATLVGLGLRRIGHTVEREDTPAIRGMINLVSYMVKVEE</sequence>